<keyword id="KW-0067">ATP-binding</keyword>
<keyword id="KW-0963">Cytoplasm</keyword>
<keyword id="KW-0378">Hydrolase</keyword>
<keyword id="KW-0460">Magnesium</keyword>
<keyword id="KW-0479">Metal-binding</keyword>
<keyword id="KW-0546">Nucleotide metabolism</keyword>
<keyword id="KW-0547">Nucleotide-binding</keyword>
<keyword id="KW-1185">Reference proteome</keyword>
<keyword id="KW-0808">Transferase</keyword>
<name>5NTC_DICDI</name>
<sequence length="592" mass="68352">MAENNNNNNNNNNNNVSTPPHQKPHLTTGLRTSSSGLLMDKRRQDEEKFSAEQVAMGKKSPTKLFSAYSLNDLSNPPTDEELNNYKDLPASSLPPIHKREKLRRVFVNRDIKLDRIEFFGFDMDYTLAVYNSPDFEELAYDMVLDKLIDIGYPKSIRKLKYDPNFPTRGLFLDRELGNLLKIDSFGNIIICVHGRTTLSKNRTAEFYPSMRVSSDEIARNRFYLLNTLFTLPEACLYADLVDHLERESGLRLTEEVADEQQQMNSPPLSSLGSESVRIDESNHQPEGDLSFSNLFQDVRTACDLVHNDGSLKTRVLDDLPRYIRKTPDMPVFFDRLRQNKNKVFLLTNSEFYYTNKVMSYMMNGYNPNYQSWRDYFDVIIVGADKPRFFSEGTTIREVDTETGNLRITNVKDRFEQGKVYHGGSLSLFQKLTGAKGSRVLYIGDHIFADIIKSKKTHGWRNLLVVPELQHELEVMNQQKDTTIHLMNLEFIRAEIYRGLDSESTTPPDIEVLHQHLKNTNDKLNFAYNKYFGSLFKNGSKSTFFSMQVQRYADLYTSDYLNLLNYPLFYHFCANSLPLPHESSSFSSFDTSN</sequence>
<reference key="1">
    <citation type="journal article" date="2005" name="Nature">
        <title>The genome of the social amoeba Dictyostelium discoideum.</title>
        <authorList>
            <person name="Eichinger L."/>
            <person name="Pachebat J.A."/>
            <person name="Gloeckner G."/>
            <person name="Rajandream M.A."/>
            <person name="Sucgang R."/>
            <person name="Berriman M."/>
            <person name="Song J."/>
            <person name="Olsen R."/>
            <person name="Szafranski K."/>
            <person name="Xu Q."/>
            <person name="Tunggal B."/>
            <person name="Kummerfeld S."/>
            <person name="Madera M."/>
            <person name="Konfortov B.A."/>
            <person name="Rivero F."/>
            <person name="Bankier A.T."/>
            <person name="Lehmann R."/>
            <person name="Hamlin N."/>
            <person name="Davies R."/>
            <person name="Gaudet P."/>
            <person name="Fey P."/>
            <person name="Pilcher K."/>
            <person name="Chen G."/>
            <person name="Saunders D."/>
            <person name="Sodergren E.J."/>
            <person name="Davis P."/>
            <person name="Kerhornou A."/>
            <person name="Nie X."/>
            <person name="Hall N."/>
            <person name="Anjard C."/>
            <person name="Hemphill L."/>
            <person name="Bason N."/>
            <person name="Farbrother P."/>
            <person name="Desany B."/>
            <person name="Just E."/>
            <person name="Morio T."/>
            <person name="Rost R."/>
            <person name="Churcher C.M."/>
            <person name="Cooper J."/>
            <person name="Haydock S."/>
            <person name="van Driessche N."/>
            <person name="Cronin A."/>
            <person name="Goodhead I."/>
            <person name="Muzny D.M."/>
            <person name="Mourier T."/>
            <person name="Pain A."/>
            <person name="Lu M."/>
            <person name="Harper D."/>
            <person name="Lindsay R."/>
            <person name="Hauser H."/>
            <person name="James K.D."/>
            <person name="Quiles M."/>
            <person name="Madan Babu M."/>
            <person name="Saito T."/>
            <person name="Buchrieser C."/>
            <person name="Wardroper A."/>
            <person name="Felder M."/>
            <person name="Thangavelu M."/>
            <person name="Johnson D."/>
            <person name="Knights A."/>
            <person name="Loulseged H."/>
            <person name="Mungall K.L."/>
            <person name="Oliver K."/>
            <person name="Price C."/>
            <person name="Quail M.A."/>
            <person name="Urushihara H."/>
            <person name="Hernandez J."/>
            <person name="Rabbinowitsch E."/>
            <person name="Steffen D."/>
            <person name="Sanders M."/>
            <person name="Ma J."/>
            <person name="Kohara Y."/>
            <person name="Sharp S."/>
            <person name="Simmonds M.N."/>
            <person name="Spiegler S."/>
            <person name="Tivey A."/>
            <person name="Sugano S."/>
            <person name="White B."/>
            <person name="Walker D."/>
            <person name="Woodward J.R."/>
            <person name="Winckler T."/>
            <person name="Tanaka Y."/>
            <person name="Shaulsky G."/>
            <person name="Schleicher M."/>
            <person name="Weinstock G.M."/>
            <person name="Rosenthal A."/>
            <person name="Cox E.C."/>
            <person name="Chisholm R.L."/>
            <person name="Gibbs R.A."/>
            <person name="Loomis W.F."/>
            <person name="Platzer M."/>
            <person name="Kay R.R."/>
            <person name="Williams J.G."/>
            <person name="Dear P.H."/>
            <person name="Noegel A.A."/>
            <person name="Barrell B.G."/>
            <person name="Kuspa A."/>
        </authorList>
    </citation>
    <scope>NUCLEOTIDE SEQUENCE [LARGE SCALE GENOMIC DNA]</scope>
    <source>
        <strain>AX4</strain>
    </source>
</reference>
<evidence type="ECO:0000250" key="1">
    <source>
        <dbReference type="UniProtKB" id="P49902"/>
    </source>
</evidence>
<evidence type="ECO:0000256" key="2">
    <source>
        <dbReference type="SAM" id="MobiDB-lite"/>
    </source>
</evidence>
<evidence type="ECO:0000305" key="3"/>
<protein>
    <recommendedName>
        <fullName evidence="1">Cytosolic purine 5'-nucleotidase</fullName>
        <ecNumber evidence="1">3.1.3.5</ecNumber>
    </recommendedName>
    <alternativeName>
        <fullName evidence="1">Cytosolic nucleoside phosphotransferase 5'N</fullName>
        <ecNumber evidence="1">2.7.1.77</ecNumber>
    </alternativeName>
</protein>
<feature type="chain" id="PRO_0000356849" description="Cytosolic purine 5'-nucleotidase">
    <location>
        <begin position="1"/>
        <end position="592"/>
    </location>
</feature>
<feature type="region of interest" description="Disordered" evidence="2">
    <location>
        <begin position="1"/>
        <end position="37"/>
    </location>
</feature>
<feature type="region of interest" description="Disordered" evidence="2">
    <location>
        <begin position="252"/>
        <end position="273"/>
    </location>
</feature>
<feature type="compositionally biased region" description="Low complexity" evidence="2">
    <location>
        <begin position="1"/>
        <end position="15"/>
    </location>
</feature>
<feature type="compositionally biased region" description="Polar residues" evidence="2">
    <location>
        <begin position="259"/>
        <end position="273"/>
    </location>
</feature>
<feature type="active site" description="Nucleophile" evidence="1">
    <location>
        <position position="122"/>
    </location>
</feature>
<feature type="active site" description="Proton donor" evidence="1">
    <location>
        <position position="124"/>
    </location>
</feature>
<feature type="binding site" evidence="1">
    <location>
        <position position="122"/>
    </location>
    <ligand>
        <name>IMP</name>
        <dbReference type="ChEBI" id="CHEBI:58053"/>
    </ligand>
</feature>
<feature type="binding site" evidence="1">
    <location>
        <position position="122"/>
    </location>
    <ligand>
        <name>Mg(2+)</name>
        <dbReference type="ChEBI" id="CHEBI:18420"/>
    </ligand>
</feature>
<feature type="binding site" evidence="1">
    <location>
        <position position="124"/>
    </location>
    <ligand>
        <name>IMP</name>
        <dbReference type="ChEBI" id="CHEBI:58053"/>
    </ligand>
</feature>
<feature type="binding site" evidence="1">
    <location>
        <position position="124"/>
    </location>
    <ligand>
        <name>Mg(2+)</name>
        <dbReference type="ChEBI" id="CHEBI:18420"/>
    </ligand>
</feature>
<feature type="binding site" evidence="1">
    <location>
        <position position="226"/>
    </location>
    <ligand>
        <name>ATP</name>
        <dbReference type="ChEBI" id="CHEBI:30616"/>
        <note>allosteric activator</note>
    </ligand>
</feature>
<feature type="binding site" evidence="1">
    <location>
        <position position="299"/>
    </location>
    <ligand>
        <name>IMP</name>
        <dbReference type="ChEBI" id="CHEBI:58053"/>
    </ligand>
</feature>
<feature type="binding site" evidence="1">
    <location>
        <position position="303"/>
    </location>
    <ligand>
        <name>IMP</name>
        <dbReference type="ChEBI" id="CHEBI:58053"/>
    </ligand>
</feature>
<feature type="binding site" evidence="1">
    <location>
        <position position="312"/>
    </location>
    <ligand>
        <name>IMP</name>
        <dbReference type="ChEBI" id="CHEBI:58053"/>
    </ligand>
</feature>
<feature type="binding site" evidence="1">
    <location>
        <position position="347"/>
    </location>
    <ligand>
        <name>IMP</name>
        <dbReference type="ChEBI" id="CHEBI:58053"/>
    </ligand>
</feature>
<feature type="binding site" evidence="1">
    <location>
        <position position="348"/>
    </location>
    <ligand>
        <name>IMP</name>
        <dbReference type="ChEBI" id="CHEBI:58053"/>
    </ligand>
</feature>
<feature type="binding site" evidence="1">
    <location>
        <position position="349"/>
    </location>
    <ligand>
        <name>IMP</name>
        <dbReference type="ChEBI" id="CHEBI:58053"/>
    </ligand>
</feature>
<feature type="binding site" evidence="1">
    <location>
        <position position="385"/>
    </location>
    <ligand>
        <name>IMP</name>
        <dbReference type="ChEBI" id="CHEBI:58053"/>
    </ligand>
</feature>
<feature type="binding site" evidence="1">
    <location>
        <position position="444"/>
    </location>
    <ligand>
        <name>Mg(2+)</name>
        <dbReference type="ChEBI" id="CHEBI:18420"/>
    </ligand>
</feature>
<feature type="binding site" evidence="1">
    <location>
        <position position="547"/>
    </location>
    <ligand>
        <name>ATP</name>
        <dbReference type="ChEBI" id="CHEBI:30616"/>
        <note>allosteric activator</note>
    </ligand>
</feature>
<feature type="binding site" evidence="1">
    <location>
        <position position="550"/>
    </location>
    <ligand>
        <name>ATP</name>
        <dbReference type="ChEBI" id="CHEBI:30616"/>
        <note>allosteric activator</note>
    </ligand>
</feature>
<gene>
    <name type="primary">nt5c2</name>
    <name type="ORF">DDB_G0279053</name>
</gene>
<comment type="function">
    <text evidence="1">Broad specificity cytosolic 5'-nucleotidase that catalyzes the dephosphorylation of 6-hydroxypurine nucleoside 5'-monophosphates. In addition, possesses a phosphotransferase activity by which it can transfer a phosphate from a donor nucleoside monophosphate to an acceptor nucleoside. Through these activities regulates the purine nucleoside/nucleotide pools within the cell.</text>
</comment>
<comment type="catalytic activity">
    <reaction evidence="1">
        <text>a ribonucleoside 5'-phosphate + H2O = a ribonucleoside + phosphate</text>
        <dbReference type="Rhea" id="RHEA:12484"/>
        <dbReference type="ChEBI" id="CHEBI:15377"/>
        <dbReference type="ChEBI" id="CHEBI:18254"/>
        <dbReference type="ChEBI" id="CHEBI:43474"/>
        <dbReference type="ChEBI" id="CHEBI:58043"/>
        <dbReference type="EC" id="3.1.3.5"/>
    </reaction>
    <physiologicalReaction direction="left-to-right" evidence="1">
        <dbReference type="Rhea" id="RHEA:12485"/>
    </physiologicalReaction>
</comment>
<comment type="catalytic activity">
    <reaction evidence="1">
        <text>a 2'-deoxyribonucleoside + a ribonucleoside 5'-phosphate = a ribonucleoside + a 2'-deoxyribonucleoside 5'-phosphate</text>
        <dbReference type="Rhea" id="RHEA:19961"/>
        <dbReference type="ChEBI" id="CHEBI:18254"/>
        <dbReference type="ChEBI" id="CHEBI:18274"/>
        <dbReference type="ChEBI" id="CHEBI:58043"/>
        <dbReference type="ChEBI" id="CHEBI:65317"/>
        <dbReference type="EC" id="2.7.1.77"/>
    </reaction>
</comment>
<comment type="cofactor">
    <cofactor evidence="1">
        <name>Mg(2+)</name>
        <dbReference type="ChEBI" id="CHEBI:18420"/>
    </cofactor>
    <text evidence="1">Binds 1 Mg(2+) ion per subunit.</text>
</comment>
<comment type="subunit">
    <text evidence="1">Homotetramer.</text>
</comment>
<comment type="subcellular location">
    <subcellularLocation>
        <location evidence="1">Cytoplasm</location>
        <location evidence="1">Cytosol</location>
    </subcellularLocation>
</comment>
<comment type="similarity">
    <text evidence="3">Belongs to the 5'(3')-deoxyribonucleotidase family.</text>
</comment>
<accession>Q54XC1</accession>
<proteinExistence type="inferred from homology"/>
<dbReference type="EC" id="3.1.3.5" evidence="1"/>
<dbReference type="EC" id="2.7.1.77" evidence="1"/>
<dbReference type="EMBL" id="AAFI02000026">
    <property type="protein sequence ID" value="EAL67948.1"/>
    <property type="molecule type" value="Genomic_DNA"/>
</dbReference>
<dbReference type="RefSeq" id="XP_641940.1">
    <property type="nucleotide sequence ID" value="XM_636848.1"/>
</dbReference>
<dbReference type="SMR" id="Q54XC1"/>
<dbReference type="FunCoup" id="Q54XC1">
    <property type="interactions" value="211"/>
</dbReference>
<dbReference type="STRING" id="44689.Q54XC1"/>
<dbReference type="PaxDb" id="44689-DDB0230202"/>
<dbReference type="EnsemblProtists" id="EAL67948">
    <property type="protein sequence ID" value="EAL67948"/>
    <property type="gene ID" value="DDB_G0279053"/>
</dbReference>
<dbReference type="GeneID" id="8621853"/>
<dbReference type="KEGG" id="ddi:DDB_G0279053"/>
<dbReference type="dictyBase" id="DDB_G0279053"/>
<dbReference type="VEuPathDB" id="AmoebaDB:DDB_G0279053"/>
<dbReference type="eggNOG" id="KOG2469">
    <property type="taxonomic scope" value="Eukaryota"/>
</dbReference>
<dbReference type="HOGENOM" id="CLU_017845_3_0_1"/>
<dbReference type="InParanoid" id="Q54XC1"/>
<dbReference type="OMA" id="WDYTDAV"/>
<dbReference type="PhylomeDB" id="Q54XC1"/>
<dbReference type="Reactome" id="R-DDI-2161541">
    <property type="pathway name" value="Abacavir metabolism"/>
</dbReference>
<dbReference type="Reactome" id="R-DDI-74259">
    <property type="pathway name" value="Purine catabolism"/>
</dbReference>
<dbReference type="Reactome" id="R-DDI-9755088">
    <property type="pathway name" value="Ribavirin ADME"/>
</dbReference>
<dbReference type="PRO" id="PR:Q54XC1"/>
<dbReference type="Proteomes" id="UP000002195">
    <property type="component" value="Chromosome 3"/>
</dbReference>
<dbReference type="GO" id="GO:0005829">
    <property type="term" value="C:cytosol"/>
    <property type="evidence" value="ECO:0007669"/>
    <property type="project" value="UniProtKB-SubCell"/>
</dbReference>
<dbReference type="GO" id="GO:0045335">
    <property type="term" value="C:phagocytic vesicle"/>
    <property type="evidence" value="ECO:0007005"/>
    <property type="project" value="dictyBase"/>
</dbReference>
<dbReference type="GO" id="GO:0008253">
    <property type="term" value="F:5'-nucleotidase activity"/>
    <property type="evidence" value="ECO:0000250"/>
    <property type="project" value="UniProtKB"/>
</dbReference>
<dbReference type="GO" id="GO:0005524">
    <property type="term" value="F:ATP binding"/>
    <property type="evidence" value="ECO:0007669"/>
    <property type="project" value="UniProtKB-KW"/>
</dbReference>
<dbReference type="GO" id="GO:0050484">
    <property type="term" value="F:GMP 5'-nucleotidase activity"/>
    <property type="evidence" value="ECO:0000250"/>
    <property type="project" value="UniProtKB"/>
</dbReference>
<dbReference type="GO" id="GO:0050483">
    <property type="term" value="F:IMP 5'-nucleotidase activity"/>
    <property type="evidence" value="ECO:0000250"/>
    <property type="project" value="UniProtKB"/>
</dbReference>
<dbReference type="GO" id="GO:0046872">
    <property type="term" value="F:metal ion binding"/>
    <property type="evidence" value="ECO:0007669"/>
    <property type="project" value="UniProtKB-KW"/>
</dbReference>
<dbReference type="GO" id="GO:0050146">
    <property type="term" value="F:nucleoside phosphotransferase activity"/>
    <property type="evidence" value="ECO:0007669"/>
    <property type="project" value="RHEA"/>
</dbReference>
<dbReference type="GO" id="GO:0046054">
    <property type="term" value="P:dGMP metabolic process"/>
    <property type="evidence" value="ECO:0000250"/>
    <property type="project" value="UniProtKB"/>
</dbReference>
<dbReference type="GO" id="GO:0046037">
    <property type="term" value="P:GMP metabolic process"/>
    <property type="evidence" value="ECO:0000250"/>
    <property type="project" value="UniProtKB"/>
</dbReference>
<dbReference type="GO" id="GO:0046040">
    <property type="term" value="P:IMP metabolic process"/>
    <property type="evidence" value="ECO:0000250"/>
    <property type="project" value="UniProtKB"/>
</dbReference>
<dbReference type="CDD" id="cd07522">
    <property type="entry name" value="HAD_cN-II"/>
    <property type="match status" value="1"/>
</dbReference>
<dbReference type="FunFam" id="3.40.50.1000:FF:000021">
    <property type="entry name" value="NT5C2 isoform 1"/>
    <property type="match status" value="1"/>
</dbReference>
<dbReference type="Gene3D" id="3.40.50.1000">
    <property type="entry name" value="HAD superfamily/HAD-like"/>
    <property type="match status" value="1"/>
</dbReference>
<dbReference type="InterPro" id="IPR036412">
    <property type="entry name" value="HAD-like_sf"/>
</dbReference>
<dbReference type="InterPro" id="IPR008380">
    <property type="entry name" value="HAD-SF_hydro_IG_5-nucl"/>
</dbReference>
<dbReference type="InterPro" id="IPR023214">
    <property type="entry name" value="HAD_sf"/>
</dbReference>
<dbReference type="InterPro" id="IPR016695">
    <property type="entry name" value="Pur_nucleotidase"/>
</dbReference>
<dbReference type="NCBIfam" id="TIGR02244">
    <property type="entry name" value="HAD-IG-Ncltidse"/>
    <property type="match status" value="1"/>
</dbReference>
<dbReference type="PANTHER" id="PTHR12103">
    <property type="entry name" value="5'-NUCLEOTIDASE DOMAIN-CONTAINING"/>
    <property type="match status" value="1"/>
</dbReference>
<dbReference type="PANTHER" id="PTHR12103:SF15">
    <property type="entry name" value="CYTOSOLIC PURINE 5'-NUCLEOTIDASE"/>
    <property type="match status" value="1"/>
</dbReference>
<dbReference type="Pfam" id="PF05761">
    <property type="entry name" value="5_nucleotid"/>
    <property type="match status" value="1"/>
</dbReference>
<dbReference type="PIRSF" id="PIRSF017434">
    <property type="entry name" value="Purine_5'-nucleotidase"/>
    <property type="match status" value="1"/>
</dbReference>
<dbReference type="SUPFAM" id="SSF56784">
    <property type="entry name" value="HAD-like"/>
    <property type="match status" value="1"/>
</dbReference>
<organism>
    <name type="scientific">Dictyostelium discoideum</name>
    <name type="common">Social amoeba</name>
    <dbReference type="NCBI Taxonomy" id="44689"/>
    <lineage>
        <taxon>Eukaryota</taxon>
        <taxon>Amoebozoa</taxon>
        <taxon>Evosea</taxon>
        <taxon>Eumycetozoa</taxon>
        <taxon>Dictyostelia</taxon>
        <taxon>Dictyosteliales</taxon>
        <taxon>Dictyosteliaceae</taxon>
        <taxon>Dictyostelium</taxon>
    </lineage>
</organism>